<name>YBEY_CHRVO</name>
<proteinExistence type="inferred from homology"/>
<feature type="chain" id="PRO_0000102439" description="Endoribonuclease YbeY">
    <location>
        <begin position="1"/>
        <end position="168"/>
    </location>
</feature>
<feature type="binding site" evidence="1">
    <location>
        <position position="127"/>
    </location>
    <ligand>
        <name>Zn(2+)</name>
        <dbReference type="ChEBI" id="CHEBI:29105"/>
        <note>catalytic</note>
    </ligand>
</feature>
<feature type="binding site" evidence="1">
    <location>
        <position position="131"/>
    </location>
    <ligand>
        <name>Zn(2+)</name>
        <dbReference type="ChEBI" id="CHEBI:29105"/>
        <note>catalytic</note>
    </ligand>
</feature>
<feature type="binding site" evidence="1">
    <location>
        <position position="137"/>
    </location>
    <ligand>
        <name>Zn(2+)</name>
        <dbReference type="ChEBI" id="CHEBI:29105"/>
        <note>catalytic</note>
    </ligand>
</feature>
<reference key="1">
    <citation type="journal article" date="2003" name="Proc. Natl. Acad. Sci. U.S.A.">
        <title>The complete genome sequence of Chromobacterium violaceum reveals remarkable and exploitable bacterial adaptability.</title>
        <authorList>
            <person name="Vasconcelos A.T.R."/>
            <person name="de Almeida D.F."/>
            <person name="Hungria M."/>
            <person name="Guimaraes C.T."/>
            <person name="Antonio R.V."/>
            <person name="Almeida F.C."/>
            <person name="de Almeida L.G.P."/>
            <person name="de Almeida R."/>
            <person name="Alves-Gomes J.A."/>
            <person name="Andrade E.M."/>
            <person name="Araripe J."/>
            <person name="de Araujo M.F.F."/>
            <person name="Astolfi-Filho S."/>
            <person name="Azevedo V."/>
            <person name="Baptista A.J."/>
            <person name="Bataus L.A.M."/>
            <person name="Batista J.S."/>
            <person name="Belo A."/>
            <person name="van den Berg C."/>
            <person name="Bogo M."/>
            <person name="Bonatto S."/>
            <person name="Bordignon J."/>
            <person name="Brigido M.M."/>
            <person name="Brito C.A."/>
            <person name="Brocchi M."/>
            <person name="Burity H.A."/>
            <person name="Camargo A.A."/>
            <person name="Cardoso D.D.P."/>
            <person name="Carneiro N.P."/>
            <person name="Carraro D.M."/>
            <person name="Carvalho C.M.B."/>
            <person name="Cascardo J.C.M."/>
            <person name="Cavada B.S."/>
            <person name="Chueire L.M.O."/>
            <person name="Creczynski-Pasa T.B."/>
            <person name="Cunha-Junior N.C."/>
            <person name="Fagundes N."/>
            <person name="Falcao C.L."/>
            <person name="Fantinatti F."/>
            <person name="Farias I.P."/>
            <person name="Felipe M.S.S."/>
            <person name="Ferrari L.P."/>
            <person name="Ferro J.A."/>
            <person name="Ferro M.I.T."/>
            <person name="Franco G.R."/>
            <person name="Freitas N.S.A."/>
            <person name="Furlan L.R."/>
            <person name="Gazzinelli R.T."/>
            <person name="Gomes E.A."/>
            <person name="Goncalves P.R."/>
            <person name="Grangeiro T.B."/>
            <person name="Grattapaglia D."/>
            <person name="Grisard E.C."/>
            <person name="Hanna E.S."/>
            <person name="Jardim S.N."/>
            <person name="Laurino J."/>
            <person name="Leoi L.C.T."/>
            <person name="Lima L.F.A."/>
            <person name="Loureiro M.F."/>
            <person name="Lyra M.C.C.P."/>
            <person name="Madeira H.M.F."/>
            <person name="Manfio G.P."/>
            <person name="Maranhao A.Q."/>
            <person name="Martins W.S."/>
            <person name="di Mauro S.M.Z."/>
            <person name="de Medeiros S.R.B."/>
            <person name="Meissner R.V."/>
            <person name="Moreira M.A.M."/>
            <person name="Nascimento F.F."/>
            <person name="Nicolas M.F."/>
            <person name="Oliveira J.G."/>
            <person name="Oliveira S.C."/>
            <person name="Paixao R.F.C."/>
            <person name="Parente J.A."/>
            <person name="Pedrosa F.O."/>
            <person name="Pena S.D.J."/>
            <person name="Pereira J.O."/>
            <person name="Pereira M."/>
            <person name="Pinto L.S.R.C."/>
            <person name="Pinto L.S."/>
            <person name="Porto J.I.R."/>
            <person name="Potrich D.P."/>
            <person name="Ramalho-Neto C.E."/>
            <person name="Reis A.M.M."/>
            <person name="Rigo L.U."/>
            <person name="Rondinelli E."/>
            <person name="Santos E.B.P."/>
            <person name="Santos F.R."/>
            <person name="Schneider M.P.C."/>
            <person name="Seuanez H.N."/>
            <person name="Silva A.M.R."/>
            <person name="da Silva A.L.C."/>
            <person name="Silva D.W."/>
            <person name="Silva R."/>
            <person name="Simoes I.C."/>
            <person name="Simon D."/>
            <person name="Soares C.M.A."/>
            <person name="Soares R.B.A."/>
            <person name="Souza E.M."/>
            <person name="Souza K.R.L."/>
            <person name="Souza R.C."/>
            <person name="Steffens M.B.R."/>
            <person name="Steindel M."/>
            <person name="Teixeira S.R."/>
            <person name="Urmenyi T."/>
            <person name="Vettore A."/>
            <person name="Wassem R."/>
            <person name="Zaha A."/>
            <person name="Simpson A.J.G."/>
        </authorList>
    </citation>
    <scope>NUCLEOTIDE SEQUENCE [LARGE SCALE GENOMIC DNA]</scope>
    <source>
        <strain>ATCC 12472 / DSM 30191 / JCM 1249 / CCUG 213 / NBRC 12614 / NCIMB 9131 / NCTC 9757 / MK</strain>
    </source>
</reference>
<organism>
    <name type="scientific">Chromobacterium violaceum (strain ATCC 12472 / DSM 30191 / JCM 1249 / CCUG 213 / NBRC 12614 / NCIMB 9131 / NCTC 9757 / MK)</name>
    <dbReference type="NCBI Taxonomy" id="243365"/>
    <lineage>
        <taxon>Bacteria</taxon>
        <taxon>Pseudomonadati</taxon>
        <taxon>Pseudomonadota</taxon>
        <taxon>Betaproteobacteria</taxon>
        <taxon>Neisseriales</taxon>
        <taxon>Chromobacteriaceae</taxon>
        <taxon>Chromobacterium</taxon>
    </lineage>
</organism>
<evidence type="ECO:0000255" key="1">
    <source>
        <dbReference type="HAMAP-Rule" id="MF_00009"/>
    </source>
</evidence>
<gene>
    <name evidence="1" type="primary">ybeY</name>
    <name type="ordered locus">CV_4152</name>
</gene>
<dbReference type="EC" id="3.1.-.-" evidence="1"/>
<dbReference type="EMBL" id="AE016825">
    <property type="protein sequence ID" value="AAQ61813.1"/>
    <property type="molecule type" value="Genomic_DNA"/>
</dbReference>
<dbReference type="RefSeq" id="WP_011137699.1">
    <property type="nucleotide sequence ID" value="NC_005085.1"/>
</dbReference>
<dbReference type="SMR" id="Q7NQI5"/>
<dbReference type="STRING" id="243365.CV_4152"/>
<dbReference type="KEGG" id="cvi:CV_4152"/>
<dbReference type="eggNOG" id="COG0319">
    <property type="taxonomic scope" value="Bacteria"/>
</dbReference>
<dbReference type="HOGENOM" id="CLU_106710_0_1_4"/>
<dbReference type="OrthoDB" id="9807740at2"/>
<dbReference type="Proteomes" id="UP000001424">
    <property type="component" value="Chromosome"/>
</dbReference>
<dbReference type="GO" id="GO:0005737">
    <property type="term" value="C:cytoplasm"/>
    <property type="evidence" value="ECO:0007669"/>
    <property type="project" value="UniProtKB-SubCell"/>
</dbReference>
<dbReference type="GO" id="GO:0004222">
    <property type="term" value="F:metalloendopeptidase activity"/>
    <property type="evidence" value="ECO:0007669"/>
    <property type="project" value="InterPro"/>
</dbReference>
<dbReference type="GO" id="GO:0004521">
    <property type="term" value="F:RNA endonuclease activity"/>
    <property type="evidence" value="ECO:0007669"/>
    <property type="project" value="UniProtKB-UniRule"/>
</dbReference>
<dbReference type="GO" id="GO:0008270">
    <property type="term" value="F:zinc ion binding"/>
    <property type="evidence" value="ECO:0007669"/>
    <property type="project" value="UniProtKB-UniRule"/>
</dbReference>
<dbReference type="GO" id="GO:0006364">
    <property type="term" value="P:rRNA processing"/>
    <property type="evidence" value="ECO:0007669"/>
    <property type="project" value="UniProtKB-UniRule"/>
</dbReference>
<dbReference type="Gene3D" id="3.40.390.30">
    <property type="entry name" value="Metalloproteases ('zincins'), catalytic domain"/>
    <property type="match status" value="1"/>
</dbReference>
<dbReference type="HAMAP" id="MF_00009">
    <property type="entry name" value="Endoribonucl_YbeY"/>
    <property type="match status" value="1"/>
</dbReference>
<dbReference type="InterPro" id="IPR023091">
    <property type="entry name" value="MetalPrtase_cat_dom_sf_prd"/>
</dbReference>
<dbReference type="InterPro" id="IPR002036">
    <property type="entry name" value="YbeY"/>
</dbReference>
<dbReference type="InterPro" id="IPR020549">
    <property type="entry name" value="YbeY_CS"/>
</dbReference>
<dbReference type="NCBIfam" id="TIGR00043">
    <property type="entry name" value="rRNA maturation RNase YbeY"/>
    <property type="match status" value="1"/>
</dbReference>
<dbReference type="PANTHER" id="PTHR46986">
    <property type="entry name" value="ENDORIBONUCLEASE YBEY, CHLOROPLASTIC"/>
    <property type="match status" value="1"/>
</dbReference>
<dbReference type="PANTHER" id="PTHR46986:SF1">
    <property type="entry name" value="ENDORIBONUCLEASE YBEY, CHLOROPLASTIC"/>
    <property type="match status" value="1"/>
</dbReference>
<dbReference type="Pfam" id="PF02130">
    <property type="entry name" value="YbeY"/>
    <property type="match status" value="1"/>
</dbReference>
<dbReference type="SUPFAM" id="SSF55486">
    <property type="entry name" value="Metalloproteases ('zincins'), catalytic domain"/>
    <property type="match status" value="1"/>
</dbReference>
<dbReference type="PROSITE" id="PS01306">
    <property type="entry name" value="UPF0054"/>
    <property type="match status" value="1"/>
</dbReference>
<comment type="function">
    <text evidence="1">Single strand-specific metallo-endoribonuclease involved in late-stage 70S ribosome quality control and in maturation of the 3' terminus of the 16S rRNA.</text>
</comment>
<comment type="cofactor">
    <cofactor evidence="1">
        <name>Zn(2+)</name>
        <dbReference type="ChEBI" id="CHEBI:29105"/>
    </cofactor>
    <text evidence="1">Binds 1 zinc ion.</text>
</comment>
<comment type="subcellular location">
    <subcellularLocation>
        <location evidence="1">Cytoplasm</location>
    </subcellularLocation>
</comment>
<comment type="similarity">
    <text evidence="1">Belongs to the endoribonuclease YbeY family.</text>
</comment>
<protein>
    <recommendedName>
        <fullName evidence="1">Endoribonuclease YbeY</fullName>
        <ecNumber evidence="1">3.1.-.-</ecNumber>
    </recommendedName>
</protein>
<keyword id="KW-0963">Cytoplasm</keyword>
<keyword id="KW-0255">Endonuclease</keyword>
<keyword id="KW-0378">Hydrolase</keyword>
<keyword id="KW-0479">Metal-binding</keyword>
<keyword id="KW-0540">Nuclease</keyword>
<keyword id="KW-1185">Reference proteome</keyword>
<keyword id="KW-0690">Ribosome biogenesis</keyword>
<keyword id="KW-0698">rRNA processing</keyword>
<keyword id="KW-0862">Zinc</keyword>
<accession>Q7NQI5</accession>
<sequence length="168" mass="18580">MKKAKRNPLLARLAGRLELTLDVRSDAAALPPPALIRRACQAALRRDVKQAQISIVIVDAAEGRQLNNDYRGKDYATNVLSFALNEGEPVEGLPLFGDLVLCAPVVEQEAAEQNKALMAHYAHLLVHGMLHLQGFDHEEDAEAEAMEVLETVIVKQLGYPDPYHEEHI</sequence>